<evidence type="ECO:0000250" key="1"/>
<evidence type="ECO:0000250" key="2">
    <source>
        <dbReference type="UniProtKB" id="P00157"/>
    </source>
</evidence>
<evidence type="ECO:0000255" key="3">
    <source>
        <dbReference type="PROSITE-ProRule" id="PRU00967"/>
    </source>
</evidence>
<evidence type="ECO:0000255" key="4">
    <source>
        <dbReference type="PROSITE-ProRule" id="PRU00968"/>
    </source>
</evidence>
<evidence type="ECO:0000305" key="5"/>
<protein>
    <recommendedName>
        <fullName>Cytochrome b</fullName>
    </recommendedName>
    <alternativeName>
        <fullName>Complex III subunit 3</fullName>
    </alternativeName>
    <alternativeName>
        <fullName>Complex III subunit III</fullName>
    </alternativeName>
    <alternativeName>
        <fullName>Cytochrome b-c1 complex subunit 3</fullName>
    </alternativeName>
    <alternativeName>
        <fullName>Ubiquinol-cytochrome-c reductase complex cytochrome b subunit</fullName>
    </alternativeName>
</protein>
<reference key="1">
    <citation type="journal article" date="1998" name="Nucleic Acids Res.">
        <title>Complete sequence of the amphioxus (Branchiostoma lanceolatum) mitochondrial genome: relations to vertebrates.</title>
        <authorList>
            <person name="Spruyt N."/>
            <person name="Delarbre C."/>
            <person name="Gachelin G."/>
            <person name="Laudet V."/>
        </authorList>
    </citation>
    <scope>NUCLEOTIDE SEQUENCE [GENOMIC DNA]</scope>
</reference>
<reference key="2">
    <citation type="submission" date="1996-12" db="EMBL/GenBank/DDBJ databases">
        <authorList>
            <person name="Gachelin G."/>
        </authorList>
    </citation>
    <scope>NUCLEOTIDE SEQUENCE [MRNA] OF 186-380</scope>
</reference>
<dbReference type="EMBL" id="Y16474">
    <property type="protein sequence ID" value="CAA76246.1"/>
    <property type="molecule type" value="Genomic_DNA"/>
</dbReference>
<dbReference type="EMBL" id="Y09849">
    <property type="protein sequence ID" value="CAA70979.1"/>
    <property type="molecule type" value="mRNA"/>
</dbReference>
<dbReference type="PIR" id="A71390">
    <property type="entry name" value="A71390"/>
</dbReference>
<dbReference type="RefSeq" id="NP_007536.1">
    <property type="nucleotide sequence ID" value="NC_001912.1"/>
</dbReference>
<dbReference type="SMR" id="P92472"/>
<dbReference type="GeneID" id="808217"/>
<dbReference type="CTD" id="4519"/>
<dbReference type="GO" id="GO:0005743">
    <property type="term" value="C:mitochondrial inner membrane"/>
    <property type="evidence" value="ECO:0007669"/>
    <property type="project" value="UniProtKB-SubCell"/>
</dbReference>
<dbReference type="GO" id="GO:0045275">
    <property type="term" value="C:respiratory chain complex III"/>
    <property type="evidence" value="ECO:0007669"/>
    <property type="project" value="InterPro"/>
</dbReference>
<dbReference type="GO" id="GO:0046872">
    <property type="term" value="F:metal ion binding"/>
    <property type="evidence" value="ECO:0007669"/>
    <property type="project" value="UniProtKB-KW"/>
</dbReference>
<dbReference type="GO" id="GO:0008121">
    <property type="term" value="F:ubiquinol-cytochrome-c reductase activity"/>
    <property type="evidence" value="ECO:0007669"/>
    <property type="project" value="InterPro"/>
</dbReference>
<dbReference type="GO" id="GO:0006122">
    <property type="term" value="P:mitochondrial electron transport, ubiquinol to cytochrome c"/>
    <property type="evidence" value="ECO:0007669"/>
    <property type="project" value="TreeGrafter"/>
</dbReference>
<dbReference type="CDD" id="cd00290">
    <property type="entry name" value="cytochrome_b_C"/>
    <property type="match status" value="1"/>
</dbReference>
<dbReference type="CDD" id="cd00284">
    <property type="entry name" value="Cytochrome_b_N"/>
    <property type="match status" value="1"/>
</dbReference>
<dbReference type="FunFam" id="1.20.810.10:FF:000002">
    <property type="entry name" value="Cytochrome b"/>
    <property type="match status" value="1"/>
</dbReference>
<dbReference type="Gene3D" id="1.20.810.10">
    <property type="entry name" value="Cytochrome Bc1 Complex, Chain C"/>
    <property type="match status" value="1"/>
</dbReference>
<dbReference type="InterPro" id="IPR005798">
    <property type="entry name" value="Cyt_b/b6_C"/>
</dbReference>
<dbReference type="InterPro" id="IPR036150">
    <property type="entry name" value="Cyt_b/b6_C_sf"/>
</dbReference>
<dbReference type="InterPro" id="IPR005797">
    <property type="entry name" value="Cyt_b/b6_N"/>
</dbReference>
<dbReference type="InterPro" id="IPR027387">
    <property type="entry name" value="Cytb/b6-like_sf"/>
</dbReference>
<dbReference type="InterPro" id="IPR030689">
    <property type="entry name" value="Cytochrome_b"/>
</dbReference>
<dbReference type="InterPro" id="IPR048260">
    <property type="entry name" value="Cytochrome_b_C_euk/bac"/>
</dbReference>
<dbReference type="InterPro" id="IPR048259">
    <property type="entry name" value="Cytochrome_b_N_euk/bac"/>
</dbReference>
<dbReference type="InterPro" id="IPR016174">
    <property type="entry name" value="Di-haem_cyt_TM"/>
</dbReference>
<dbReference type="PANTHER" id="PTHR19271">
    <property type="entry name" value="CYTOCHROME B"/>
    <property type="match status" value="1"/>
</dbReference>
<dbReference type="PANTHER" id="PTHR19271:SF16">
    <property type="entry name" value="CYTOCHROME B"/>
    <property type="match status" value="1"/>
</dbReference>
<dbReference type="Pfam" id="PF00032">
    <property type="entry name" value="Cytochrom_B_C"/>
    <property type="match status" value="1"/>
</dbReference>
<dbReference type="Pfam" id="PF00033">
    <property type="entry name" value="Cytochrome_B"/>
    <property type="match status" value="1"/>
</dbReference>
<dbReference type="PIRSF" id="PIRSF038885">
    <property type="entry name" value="COB"/>
    <property type="match status" value="1"/>
</dbReference>
<dbReference type="SUPFAM" id="SSF81648">
    <property type="entry name" value="a domain/subunit of cytochrome bc1 complex (Ubiquinol-cytochrome c reductase)"/>
    <property type="match status" value="1"/>
</dbReference>
<dbReference type="SUPFAM" id="SSF81342">
    <property type="entry name" value="Transmembrane di-heme cytochromes"/>
    <property type="match status" value="1"/>
</dbReference>
<dbReference type="PROSITE" id="PS51003">
    <property type="entry name" value="CYTB_CTER"/>
    <property type="match status" value="1"/>
</dbReference>
<dbReference type="PROSITE" id="PS51002">
    <property type="entry name" value="CYTB_NTER"/>
    <property type="match status" value="1"/>
</dbReference>
<keyword id="KW-0249">Electron transport</keyword>
<keyword id="KW-0349">Heme</keyword>
<keyword id="KW-0408">Iron</keyword>
<keyword id="KW-0472">Membrane</keyword>
<keyword id="KW-0479">Metal-binding</keyword>
<keyword id="KW-0496">Mitochondrion</keyword>
<keyword id="KW-0999">Mitochondrion inner membrane</keyword>
<keyword id="KW-0679">Respiratory chain</keyword>
<keyword id="KW-0812">Transmembrane</keyword>
<keyword id="KW-1133">Transmembrane helix</keyword>
<keyword id="KW-0813">Transport</keyword>
<keyword id="KW-0830">Ubiquinone</keyword>
<gene>
    <name type="primary">MT-CYB</name>
    <name type="synonym">COB</name>
    <name type="synonym">CYTB</name>
    <name type="synonym">MTCYB</name>
</gene>
<name>CYB_BRALA</name>
<sequence>MSGPLRKHHPLLKVVNHSVIDLPVPSNISVMWNFGSLLGLCLVSQILTGLFLAMHYTADVNLAFSSVAHICRDVNYGWLLRNLHANGASFMFICLYMHIGRGLYYGSYFYVETWNIGVMLLVLTMATAFLGYVLPWGQMSFWGATVITNLFSAIPYFGPDLVQWLWGGFSVDNATLTRFFAFHFFLPFMIAGLSVVHLLFLHQTGANNPTGLAGDVDKVPFHAYFSYKDVVGFVVLLAGLVFIALFSPNLLTDPENYIPANPLVTPVHIQPEWYFLFAYAILRSIPNKLGGVVALAMSIVVLFFMPFVHSSRQTSHNFRPLAQVLFWLMVVNVLLLTWLGGQPVEYPYIFLGQAASVIYFVNILLFIPIVGYVENKLLFS</sequence>
<proteinExistence type="evidence at transcript level"/>
<comment type="function">
    <text evidence="2">Component of the ubiquinol-cytochrome c reductase complex (complex III or cytochrome b-c1 complex) that is part of the mitochondrial respiratory chain. The b-c1 complex mediates electron transfer from ubiquinol to cytochrome c. Contributes to the generation of a proton gradient across the mitochondrial membrane that is then used for ATP synthesis.</text>
</comment>
<comment type="cofactor">
    <cofactor evidence="2">
        <name>heme b</name>
        <dbReference type="ChEBI" id="CHEBI:60344"/>
    </cofactor>
    <text evidence="2">Binds 2 heme b groups non-covalently.</text>
</comment>
<comment type="subunit">
    <text evidence="2">The cytochrome bc1 complex contains 3 respiratory subunits (MT-CYB, CYC1 and UQCRFS1), 2 core proteins (UQCRC1 and UQCRC2) and probably 6 low-molecular weight proteins.</text>
</comment>
<comment type="subcellular location">
    <subcellularLocation>
        <location evidence="2">Mitochondrion inner membrane</location>
        <topology evidence="2">Multi-pass membrane protein</topology>
    </subcellularLocation>
</comment>
<comment type="miscellaneous">
    <text evidence="1">Heme 1 (or BL or b562) is low-potential and absorbs at about 562 nm, and heme 2 (or BH or b566) is high-potential and absorbs at about 566 nm.</text>
</comment>
<comment type="similarity">
    <text evidence="3 4">Belongs to the cytochrome b family.</text>
</comment>
<comment type="caution">
    <text evidence="2">The full-length protein contains only eight transmembrane helices, not nine as predicted by bioinformatics tools.</text>
</comment>
<feature type="chain" id="PRO_0000060691" description="Cytochrome b">
    <location>
        <begin position="1"/>
        <end position="380"/>
    </location>
</feature>
<feature type="transmembrane region" description="Helical" evidence="2">
    <location>
        <begin position="34"/>
        <end position="54"/>
    </location>
</feature>
<feature type="transmembrane region" description="Helical" evidence="2">
    <location>
        <begin position="78"/>
        <end position="99"/>
    </location>
</feature>
<feature type="transmembrane region" description="Helical" evidence="2">
    <location>
        <begin position="114"/>
        <end position="134"/>
    </location>
</feature>
<feature type="transmembrane region" description="Helical" evidence="2">
    <location>
        <begin position="179"/>
        <end position="199"/>
    </location>
</feature>
<feature type="transmembrane region" description="Helical" evidence="2">
    <location>
        <begin position="227"/>
        <end position="247"/>
    </location>
</feature>
<feature type="transmembrane region" description="Helical" evidence="2">
    <location>
        <begin position="289"/>
        <end position="309"/>
    </location>
</feature>
<feature type="transmembrane region" description="Helical" evidence="2">
    <location>
        <begin position="321"/>
        <end position="341"/>
    </location>
</feature>
<feature type="transmembrane region" description="Helical" evidence="2">
    <location>
        <begin position="348"/>
        <end position="368"/>
    </location>
</feature>
<feature type="binding site" description="axial binding residue" evidence="2">
    <location>
        <position position="84"/>
    </location>
    <ligand>
        <name>heme b</name>
        <dbReference type="ChEBI" id="CHEBI:60344"/>
        <label>b562</label>
    </ligand>
    <ligandPart>
        <name>Fe</name>
        <dbReference type="ChEBI" id="CHEBI:18248"/>
    </ligandPart>
</feature>
<feature type="binding site" description="axial binding residue" evidence="2">
    <location>
        <position position="98"/>
    </location>
    <ligand>
        <name>heme b</name>
        <dbReference type="ChEBI" id="CHEBI:60344"/>
        <label>b566</label>
    </ligand>
    <ligandPart>
        <name>Fe</name>
        <dbReference type="ChEBI" id="CHEBI:18248"/>
    </ligandPart>
</feature>
<feature type="binding site" description="axial binding residue" evidence="2">
    <location>
        <position position="183"/>
    </location>
    <ligand>
        <name>heme b</name>
        <dbReference type="ChEBI" id="CHEBI:60344"/>
        <label>b562</label>
    </ligand>
    <ligandPart>
        <name>Fe</name>
        <dbReference type="ChEBI" id="CHEBI:18248"/>
    </ligandPart>
</feature>
<feature type="binding site" description="axial binding residue" evidence="2">
    <location>
        <position position="197"/>
    </location>
    <ligand>
        <name>heme b</name>
        <dbReference type="ChEBI" id="CHEBI:60344"/>
        <label>b566</label>
    </ligand>
    <ligandPart>
        <name>Fe</name>
        <dbReference type="ChEBI" id="CHEBI:18248"/>
    </ligandPart>
</feature>
<feature type="binding site" evidence="2">
    <location>
        <position position="202"/>
    </location>
    <ligand>
        <name>a ubiquinone</name>
        <dbReference type="ChEBI" id="CHEBI:16389"/>
    </ligand>
</feature>
<feature type="sequence conflict" description="In Ref. 2; CAA70979." evidence="5" ref="2">
    <original>S</original>
    <variation>C</variation>
    <location>
        <position position="247"/>
    </location>
</feature>
<accession>P92472</accession>
<accession>O79415</accession>
<organism>
    <name type="scientific">Branchiostoma lanceolatum</name>
    <name type="common">Common lancelet</name>
    <name type="synonym">Amphioxus lanceolatum</name>
    <dbReference type="NCBI Taxonomy" id="7740"/>
    <lineage>
        <taxon>Eukaryota</taxon>
        <taxon>Metazoa</taxon>
        <taxon>Chordata</taxon>
        <taxon>Cephalochordata</taxon>
        <taxon>Leptocardii</taxon>
        <taxon>Amphioxiformes</taxon>
        <taxon>Branchiostomatidae</taxon>
        <taxon>Branchiostoma</taxon>
    </lineage>
</organism>
<geneLocation type="mitochondrion"/>